<dbReference type="EC" id="3.6.4.-" evidence="1"/>
<dbReference type="EMBL" id="M59716">
    <property type="protein sequence ID" value="AAA33750.1"/>
    <property type="molecule type" value="Genomic_DNA"/>
</dbReference>
<dbReference type="PIR" id="JE0415">
    <property type="entry name" value="JE0415"/>
</dbReference>
<dbReference type="SMR" id="P22132"/>
<dbReference type="VEuPathDB" id="FungiDB:PITG_15078"/>
<dbReference type="GO" id="GO:0005737">
    <property type="term" value="C:cytoplasm"/>
    <property type="evidence" value="ECO:0007669"/>
    <property type="project" value="UniProtKB-KW"/>
</dbReference>
<dbReference type="GO" id="GO:0005856">
    <property type="term" value="C:cytoskeleton"/>
    <property type="evidence" value="ECO:0007669"/>
    <property type="project" value="UniProtKB-SubCell"/>
</dbReference>
<dbReference type="GO" id="GO:0005524">
    <property type="term" value="F:ATP binding"/>
    <property type="evidence" value="ECO:0007669"/>
    <property type="project" value="UniProtKB-KW"/>
</dbReference>
<dbReference type="GO" id="GO:0016787">
    <property type="term" value="F:hydrolase activity"/>
    <property type="evidence" value="ECO:0007669"/>
    <property type="project" value="UniProtKB-KW"/>
</dbReference>
<dbReference type="CDD" id="cd10224">
    <property type="entry name" value="ASKHA_NBD_actin"/>
    <property type="match status" value="1"/>
</dbReference>
<dbReference type="FunFam" id="2.30.36.70:FF:000001">
    <property type="entry name" value="Actin, alpha skeletal muscle"/>
    <property type="match status" value="1"/>
</dbReference>
<dbReference type="FunFam" id="3.30.420.40:FF:000291">
    <property type="entry name" value="Actin, alpha skeletal muscle"/>
    <property type="match status" value="1"/>
</dbReference>
<dbReference type="FunFam" id="3.90.640.10:FF:000001">
    <property type="entry name" value="Actin, muscle"/>
    <property type="match status" value="1"/>
</dbReference>
<dbReference type="FunFam" id="3.30.420.40:FF:000404">
    <property type="entry name" value="Major actin"/>
    <property type="match status" value="1"/>
</dbReference>
<dbReference type="FunFam" id="3.30.420.40:FF:000058">
    <property type="entry name" value="Putative actin-related protein 5"/>
    <property type="match status" value="1"/>
</dbReference>
<dbReference type="Gene3D" id="3.30.420.40">
    <property type="match status" value="2"/>
</dbReference>
<dbReference type="Gene3D" id="3.90.640.10">
    <property type="entry name" value="Actin, Chain A, domain 4"/>
    <property type="match status" value="1"/>
</dbReference>
<dbReference type="InterPro" id="IPR004000">
    <property type="entry name" value="Actin"/>
</dbReference>
<dbReference type="InterPro" id="IPR020902">
    <property type="entry name" value="Actin/actin-like_CS"/>
</dbReference>
<dbReference type="InterPro" id="IPR004001">
    <property type="entry name" value="Actin_CS"/>
</dbReference>
<dbReference type="InterPro" id="IPR043129">
    <property type="entry name" value="ATPase_NBD"/>
</dbReference>
<dbReference type="PANTHER" id="PTHR11937">
    <property type="entry name" value="ACTIN"/>
    <property type="match status" value="1"/>
</dbReference>
<dbReference type="Pfam" id="PF00022">
    <property type="entry name" value="Actin"/>
    <property type="match status" value="1"/>
</dbReference>
<dbReference type="PRINTS" id="PR00190">
    <property type="entry name" value="ACTIN"/>
</dbReference>
<dbReference type="SMART" id="SM00268">
    <property type="entry name" value="ACTIN"/>
    <property type="match status" value="1"/>
</dbReference>
<dbReference type="SUPFAM" id="SSF53067">
    <property type="entry name" value="Actin-like ATPase domain"/>
    <property type="match status" value="2"/>
</dbReference>
<dbReference type="PROSITE" id="PS00406">
    <property type="entry name" value="ACTINS_1"/>
    <property type="match status" value="1"/>
</dbReference>
<dbReference type="PROSITE" id="PS00432">
    <property type="entry name" value="ACTINS_2"/>
    <property type="match status" value="1"/>
</dbReference>
<dbReference type="PROSITE" id="PS01132">
    <property type="entry name" value="ACTINS_ACT_LIKE"/>
    <property type="match status" value="1"/>
</dbReference>
<name>ACT2_PHYIN</name>
<keyword id="KW-0067">ATP-binding</keyword>
<keyword id="KW-0963">Cytoplasm</keyword>
<keyword id="KW-0206">Cytoskeleton</keyword>
<keyword id="KW-0378">Hydrolase</keyword>
<keyword id="KW-0547">Nucleotide-binding</keyword>
<evidence type="ECO:0000250" key="1">
    <source>
        <dbReference type="UniProtKB" id="P68137"/>
    </source>
</evidence>
<evidence type="ECO:0000305" key="2"/>
<protein>
    <recommendedName>
        <fullName>Actin-2</fullName>
        <ecNumber evidence="1">3.6.4.-</ecNumber>
    </recommendedName>
</protein>
<accession>P22132</accession>
<organism>
    <name type="scientific">Phytophthora infestans</name>
    <name type="common">Potato late blight agent</name>
    <name type="synonym">Botrytis infestans</name>
    <dbReference type="NCBI Taxonomy" id="4787"/>
    <lineage>
        <taxon>Eukaryota</taxon>
        <taxon>Sar</taxon>
        <taxon>Stramenopiles</taxon>
        <taxon>Oomycota</taxon>
        <taxon>Peronosporales</taxon>
        <taxon>Peronosporaceae</taxon>
        <taxon>Phytophthora</taxon>
    </lineage>
</organism>
<proteinExistence type="evidence at transcript level"/>
<reference key="1">
    <citation type="journal article" date="1991" name="Gene">
        <title>Actin in the oomycetous fungus Phytophthora infestans is the product of several genes.</title>
        <authorList>
            <person name="Unkles S.E."/>
            <person name="Moon R.P."/>
            <person name="Hawkins A.R."/>
            <person name="Duncan J.M."/>
            <person name="Kinghorn J.R."/>
        </authorList>
    </citation>
    <scope>NUCLEOTIDE SEQUENCE [GENOMIC DNA]</scope>
</reference>
<comment type="function">
    <text>Actins are highly conserved proteins that are involved in various types of cell motility and are ubiquitously expressed in all eukaryotic cells.</text>
</comment>
<comment type="catalytic activity">
    <reaction evidence="1">
        <text>ATP + H2O = ADP + phosphate + H(+)</text>
        <dbReference type="Rhea" id="RHEA:13065"/>
        <dbReference type="ChEBI" id="CHEBI:15377"/>
        <dbReference type="ChEBI" id="CHEBI:15378"/>
        <dbReference type="ChEBI" id="CHEBI:30616"/>
        <dbReference type="ChEBI" id="CHEBI:43474"/>
        <dbReference type="ChEBI" id="CHEBI:456216"/>
    </reaction>
</comment>
<comment type="subcellular location">
    <subcellularLocation>
        <location>Cytoplasm</location>
        <location>Cytoskeleton</location>
    </subcellularLocation>
</comment>
<comment type="tissue specificity">
    <text>ACTA and ACTB are actively transcribed in mycelium, sporangia and germinating cysts but only at a low level in the case of ACTB.</text>
</comment>
<comment type="similarity">
    <text evidence="2">Belongs to the actin family.</text>
</comment>
<gene>
    <name type="primary">ACTB</name>
</gene>
<sequence length="375" mass="41958">MDDDIQAVVIDNGSGMCKAGFAGDDAPRAVFPSIVGMPKHLGIMVGMNQKDAYIGDEAQAKRGVLTLRYPIEHGIVTNWDDMEKIWSHTFYNELRVAPEEHPVLLTEAPLNPKANRERMTQIMFETFNVPAMYVNIQAVLSLYASGRTTGCVLDSGDGVSHTVPIYEGYALPHAIVRLDLAGRDLTDYMMKILTERGYSFTTTAEREIVRDIKEKLTYVAMDFDEEMEKSTRSSALDKTYELPDGNVIVIGNERFRTPEVLFNPSMIGRECSGVHECAFQTIMKCDVDIRRDLYSNVVLSGGSTMFPGIGERMTKEVIKLAPTAMKVKIITPPERKYSVWIGGSILASLATFQHMWISKTEYDESGPSIVHRKCF</sequence>
<feature type="chain" id="PRO_0000088985" description="Actin-2">
    <location>
        <begin position="1"/>
        <end position="375"/>
    </location>
</feature>